<reference key="1">
    <citation type="journal article" date="2007" name="Nat. Biotechnol.">
        <title>Complete genome sequence of the myxobacterium Sorangium cellulosum.</title>
        <authorList>
            <person name="Schneiker S."/>
            <person name="Perlova O."/>
            <person name="Kaiser O."/>
            <person name="Gerth K."/>
            <person name="Alici A."/>
            <person name="Altmeyer M.O."/>
            <person name="Bartels D."/>
            <person name="Bekel T."/>
            <person name="Beyer S."/>
            <person name="Bode E."/>
            <person name="Bode H.B."/>
            <person name="Bolten C.J."/>
            <person name="Choudhuri J.V."/>
            <person name="Doss S."/>
            <person name="Elnakady Y.A."/>
            <person name="Frank B."/>
            <person name="Gaigalat L."/>
            <person name="Goesmann A."/>
            <person name="Groeger C."/>
            <person name="Gross F."/>
            <person name="Jelsbak L."/>
            <person name="Jelsbak L."/>
            <person name="Kalinowski J."/>
            <person name="Kegler C."/>
            <person name="Knauber T."/>
            <person name="Konietzny S."/>
            <person name="Kopp M."/>
            <person name="Krause L."/>
            <person name="Krug D."/>
            <person name="Linke B."/>
            <person name="Mahmud T."/>
            <person name="Martinez-Arias R."/>
            <person name="McHardy A.C."/>
            <person name="Merai M."/>
            <person name="Meyer F."/>
            <person name="Mormann S."/>
            <person name="Munoz-Dorado J."/>
            <person name="Perez J."/>
            <person name="Pradella S."/>
            <person name="Rachid S."/>
            <person name="Raddatz G."/>
            <person name="Rosenau F."/>
            <person name="Rueckert C."/>
            <person name="Sasse F."/>
            <person name="Scharfe M."/>
            <person name="Schuster S.C."/>
            <person name="Suen G."/>
            <person name="Treuner-Lange A."/>
            <person name="Velicer G.J."/>
            <person name="Vorholter F.-J."/>
            <person name="Weissman K.J."/>
            <person name="Welch R.D."/>
            <person name="Wenzel S.C."/>
            <person name="Whitworth D.E."/>
            <person name="Wilhelm S."/>
            <person name="Wittmann C."/>
            <person name="Bloecker H."/>
            <person name="Puehler A."/>
            <person name="Mueller R."/>
        </authorList>
    </citation>
    <scope>NUCLEOTIDE SEQUENCE [LARGE SCALE GENOMIC DNA]</scope>
    <source>
        <strain>So ce56</strain>
    </source>
</reference>
<comment type="function">
    <text evidence="1">Catalyzes the dehydration of D-mannonate.</text>
</comment>
<comment type="catalytic activity">
    <reaction evidence="1">
        <text>D-mannonate = 2-dehydro-3-deoxy-D-gluconate + H2O</text>
        <dbReference type="Rhea" id="RHEA:20097"/>
        <dbReference type="ChEBI" id="CHEBI:15377"/>
        <dbReference type="ChEBI" id="CHEBI:17767"/>
        <dbReference type="ChEBI" id="CHEBI:57990"/>
        <dbReference type="EC" id="4.2.1.8"/>
    </reaction>
</comment>
<comment type="cofactor">
    <cofactor evidence="1">
        <name>Fe(2+)</name>
        <dbReference type="ChEBI" id="CHEBI:29033"/>
    </cofactor>
    <cofactor evidence="1">
        <name>Mn(2+)</name>
        <dbReference type="ChEBI" id="CHEBI:29035"/>
    </cofactor>
</comment>
<comment type="pathway">
    <text evidence="1">Carbohydrate metabolism; pentose and glucuronate interconversion.</text>
</comment>
<comment type="similarity">
    <text evidence="1">Belongs to the mannonate dehydratase family.</text>
</comment>
<feature type="chain" id="PRO_1000075905" description="Mannonate dehydratase">
    <location>
        <begin position="1"/>
        <end position="357"/>
    </location>
</feature>
<evidence type="ECO:0000255" key="1">
    <source>
        <dbReference type="HAMAP-Rule" id="MF_00106"/>
    </source>
</evidence>
<gene>
    <name evidence="1" type="primary">uxuA</name>
    <name type="ordered locus">sce4078</name>
</gene>
<dbReference type="EC" id="4.2.1.8" evidence="1"/>
<dbReference type="EMBL" id="AM746676">
    <property type="protein sequence ID" value="CAN94241.1"/>
    <property type="molecule type" value="Genomic_DNA"/>
</dbReference>
<dbReference type="RefSeq" id="WP_012236711.1">
    <property type="nucleotide sequence ID" value="NC_010162.1"/>
</dbReference>
<dbReference type="SMR" id="A9EVN4"/>
<dbReference type="STRING" id="448385.sce4078"/>
<dbReference type="KEGG" id="scl:sce4078"/>
<dbReference type="eggNOG" id="COG1312">
    <property type="taxonomic scope" value="Bacteria"/>
</dbReference>
<dbReference type="HOGENOM" id="CLU_058621_1_0_7"/>
<dbReference type="OrthoDB" id="9780250at2"/>
<dbReference type="BioCyc" id="SCEL448385:SCE_RS20970-MONOMER"/>
<dbReference type="UniPathway" id="UPA00246"/>
<dbReference type="Proteomes" id="UP000002139">
    <property type="component" value="Chromosome"/>
</dbReference>
<dbReference type="GO" id="GO:0008198">
    <property type="term" value="F:ferrous iron binding"/>
    <property type="evidence" value="ECO:0007669"/>
    <property type="project" value="TreeGrafter"/>
</dbReference>
<dbReference type="GO" id="GO:0030145">
    <property type="term" value="F:manganese ion binding"/>
    <property type="evidence" value="ECO:0007669"/>
    <property type="project" value="TreeGrafter"/>
</dbReference>
<dbReference type="GO" id="GO:0008927">
    <property type="term" value="F:mannonate dehydratase activity"/>
    <property type="evidence" value="ECO:0007669"/>
    <property type="project" value="UniProtKB-UniRule"/>
</dbReference>
<dbReference type="GO" id="GO:0042840">
    <property type="term" value="P:D-glucuronate catabolic process"/>
    <property type="evidence" value="ECO:0007669"/>
    <property type="project" value="TreeGrafter"/>
</dbReference>
<dbReference type="Gene3D" id="3.20.20.150">
    <property type="entry name" value="Divalent-metal-dependent TIM barrel enzymes"/>
    <property type="match status" value="1"/>
</dbReference>
<dbReference type="HAMAP" id="MF_00106">
    <property type="entry name" value="UxuA"/>
    <property type="match status" value="1"/>
</dbReference>
<dbReference type="InterPro" id="IPR004628">
    <property type="entry name" value="Man_deHydtase"/>
</dbReference>
<dbReference type="InterPro" id="IPR036237">
    <property type="entry name" value="Xyl_isomerase-like_sf"/>
</dbReference>
<dbReference type="NCBIfam" id="NF003027">
    <property type="entry name" value="PRK03906.1"/>
    <property type="match status" value="2"/>
</dbReference>
<dbReference type="NCBIfam" id="TIGR00695">
    <property type="entry name" value="uxuA"/>
    <property type="match status" value="1"/>
</dbReference>
<dbReference type="PANTHER" id="PTHR30387">
    <property type="entry name" value="MANNONATE DEHYDRATASE"/>
    <property type="match status" value="1"/>
</dbReference>
<dbReference type="PANTHER" id="PTHR30387:SF2">
    <property type="entry name" value="MANNONATE DEHYDRATASE"/>
    <property type="match status" value="1"/>
</dbReference>
<dbReference type="Pfam" id="PF03786">
    <property type="entry name" value="UxuA"/>
    <property type="match status" value="1"/>
</dbReference>
<dbReference type="PIRSF" id="PIRSF016049">
    <property type="entry name" value="Man_dehyd"/>
    <property type="match status" value="1"/>
</dbReference>
<dbReference type="SUPFAM" id="SSF51658">
    <property type="entry name" value="Xylose isomerase-like"/>
    <property type="match status" value="1"/>
</dbReference>
<proteinExistence type="inferred from homology"/>
<keyword id="KW-0408">Iron</keyword>
<keyword id="KW-0456">Lyase</keyword>
<keyword id="KW-0464">Manganese</keyword>
<keyword id="KW-1185">Reference proteome</keyword>
<protein>
    <recommendedName>
        <fullName evidence="1">Mannonate dehydratase</fullName>
        <ecNumber evidence="1">4.2.1.8</ecNumber>
    </recommendedName>
    <alternativeName>
        <fullName evidence="1">D-mannonate hydro-lyase</fullName>
    </alternativeName>
</protein>
<sequence length="357" mass="39710">MKMTFRWYGENDPVKLEYIRQIPGIYGIVSAIYDVPVGEVWPVERLQALRARVEGVGLRFEVVESVPVHEDIKLGKPARERLIDNFCQNIRNCAAAGVKVICYNFMPVFDWTRTEMARELPDGSLTLAFDAAAVAEIDPEQGISLPGWDSSYRPEQLRAVLDEYKNVSEEALWEHLEHFLRRIIPVAEEVGVRMAMHPDDPPRPIFGLPRIVKNRDDLMRLVKTVDSPANGITLCSGSLGADLCNNIVSLVREFGGMGRIPFGHLRNVAVQEDGTFFESAHLSCEGSLDMAAIVKAYHDVGFDGYVRPDHGRMIWGETGKPGYGLYDRALGLVYLNGLWEATCKLSPGPAAKVPAPG</sequence>
<organism>
    <name type="scientific">Sorangium cellulosum (strain So ce56)</name>
    <name type="common">Polyangium cellulosum (strain So ce56)</name>
    <dbReference type="NCBI Taxonomy" id="448385"/>
    <lineage>
        <taxon>Bacteria</taxon>
        <taxon>Pseudomonadati</taxon>
        <taxon>Myxococcota</taxon>
        <taxon>Polyangia</taxon>
        <taxon>Polyangiales</taxon>
        <taxon>Polyangiaceae</taxon>
        <taxon>Sorangium</taxon>
    </lineage>
</organism>
<accession>A9EVN4</accession>
<name>UXUA_SORC5</name>